<gene>
    <name type="primary">gnb1</name>
</gene>
<feature type="chain" id="PRO_0000127691" description="Guanine nucleotide-binding protein G(I)/G(S)/G(T) subunit beta-1">
    <location>
        <begin position="1"/>
        <end position="340"/>
    </location>
</feature>
<feature type="repeat" description="WD 1">
    <location>
        <begin position="53"/>
        <end position="83"/>
    </location>
</feature>
<feature type="repeat" description="WD 2">
    <location>
        <begin position="95"/>
        <end position="125"/>
    </location>
</feature>
<feature type="repeat" description="WD 3">
    <location>
        <begin position="141"/>
        <end position="170"/>
    </location>
</feature>
<feature type="repeat" description="WD 4">
    <location>
        <begin position="182"/>
        <end position="212"/>
    </location>
</feature>
<feature type="repeat" description="WD 5">
    <location>
        <begin position="224"/>
        <end position="254"/>
    </location>
</feature>
<feature type="repeat" description="WD 6">
    <location>
        <begin position="268"/>
        <end position="298"/>
    </location>
</feature>
<feature type="repeat" description="WD 7">
    <location>
        <begin position="310"/>
        <end position="340"/>
    </location>
</feature>
<keyword id="KW-1185">Reference proteome</keyword>
<keyword id="KW-0677">Repeat</keyword>
<keyword id="KW-0807">Transducer</keyword>
<keyword id="KW-0853">WD repeat</keyword>
<name>GBB1_DANRE</name>
<accession>Q6PH57</accession>
<evidence type="ECO:0000250" key="1"/>
<evidence type="ECO:0000305" key="2"/>
<organism>
    <name type="scientific">Danio rerio</name>
    <name type="common">Zebrafish</name>
    <name type="synonym">Brachydanio rerio</name>
    <dbReference type="NCBI Taxonomy" id="7955"/>
    <lineage>
        <taxon>Eukaryota</taxon>
        <taxon>Metazoa</taxon>
        <taxon>Chordata</taxon>
        <taxon>Craniata</taxon>
        <taxon>Vertebrata</taxon>
        <taxon>Euteleostomi</taxon>
        <taxon>Actinopterygii</taxon>
        <taxon>Neopterygii</taxon>
        <taxon>Teleostei</taxon>
        <taxon>Ostariophysi</taxon>
        <taxon>Cypriniformes</taxon>
        <taxon>Danionidae</taxon>
        <taxon>Danioninae</taxon>
        <taxon>Danio</taxon>
    </lineage>
</organism>
<protein>
    <recommendedName>
        <fullName>Guanine nucleotide-binding protein G(I)/G(S)/G(T) subunit beta-1</fullName>
    </recommendedName>
    <alternativeName>
        <fullName>Transducin beta chain 1</fullName>
    </alternativeName>
</protein>
<reference key="1">
    <citation type="submission" date="2004-06" db="EMBL/GenBank/DDBJ databases">
        <authorList>
            <consortium name="NIH - Zebrafish Gene Collection (ZGC) project"/>
        </authorList>
    </citation>
    <scope>NUCLEOTIDE SEQUENCE [LARGE SCALE MRNA]</scope>
    <source>
        <tissue>Embryo</tissue>
        <tissue>Kidney</tissue>
    </source>
</reference>
<proteinExistence type="evidence at transcript level"/>
<comment type="function">
    <text evidence="1">Guanine nucleotide-binding proteins (G proteins) are involved as a modulator or transducer in various transmembrane signaling systems. The beta and gamma chains are required for the GTPase activity, for replacement of GDP by GTP, and for G protein-effector interaction (By similarity).</text>
</comment>
<comment type="subunit">
    <text>G proteins are composed of 3 units, alpha, beta and gamma.</text>
</comment>
<comment type="similarity">
    <text evidence="2">Belongs to the WD repeat G protein beta family.</text>
</comment>
<dbReference type="EMBL" id="BC056708">
    <property type="protein sequence ID" value="AAH56708.1"/>
    <property type="molecule type" value="mRNA"/>
</dbReference>
<dbReference type="EMBL" id="BC071277">
    <property type="protein sequence ID" value="AAH71277.1"/>
    <property type="molecule type" value="mRNA"/>
</dbReference>
<dbReference type="RefSeq" id="NP_997774.1">
    <property type="nucleotide sequence ID" value="NM_212609.1"/>
</dbReference>
<dbReference type="SMR" id="Q6PH57"/>
<dbReference type="FunCoup" id="Q6PH57">
    <property type="interactions" value="2557"/>
</dbReference>
<dbReference type="STRING" id="7955.ENSDARP00000111963"/>
<dbReference type="PaxDb" id="7955-ENSDARP00000111963"/>
<dbReference type="Ensembl" id="ENSDART00000130104">
    <property type="protein sequence ID" value="ENSDARP00000111963"/>
    <property type="gene ID" value="ENSDARG00000090454"/>
</dbReference>
<dbReference type="Ensembl" id="ENSDART00000184212">
    <property type="protein sequence ID" value="ENSDARP00000150406"/>
    <property type="gene ID" value="ENSDARG00000090454"/>
</dbReference>
<dbReference type="GeneID" id="322104"/>
<dbReference type="KEGG" id="dre:322104"/>
<dbReference type="AGR" id="ZFIN:ZDB-GENE-030131-823"/>
<dbReference type="CTD" id="322104"/>
<dbReference type="ZFIN" id="ZDB-GENE-030131-823">
    <property type="gene designation" value="gnb1a"/>
</dbReference>
<dbReference type="eggNOG" id="KOG0286">
    <property type="taxonomic scope" value="Eukaryota"/>
</dbReference>
<dbReference type="HOGENOM" id="CLU_000288_57_34_1"/>
<dbReference type="InParanoid" id="Q6PH57"/>
<dbReference type="OMA" id="WQITANI"/>
<dbReference type="OrthoDB" id="10255630at2759"/>
<dbReference type="PhylomeDB" id="Q6PH57"/>
<dbReference type="TreeFam" id="TF106149"/>
<dbReference type="PRO" id="PR:Q6PH57"/>
<dbReference type="Proteomes" id="UP000000437">
    <property type="component" value="Chromosome 8"/>
</dbReference>
<dbReference type="Bgee" id="ENSDARG00000090454">
    <property type="expression patterns" value="Expressed in zone of skin and 44 other cell types or tissues"/>
</dbReference>
<dbReference type="GO" id="GO:0005737">
    <property type="term" value="C:cytoplasm"/>
    <property type="evidence" value="ECO:0000318"/>
    <property type="project" value="GO_Central"/>
</dbReference>
<dbReference type="GO" id="GO:0005834">
    <property type="term" value="C:heterotrimeric G-protein complex"/>
    <property type="evidence" value="ECO:0000318"/>
    <property type="project" value="GO_Central"/>
</dbReference>
<dbReference type="GO" id="GO:0030159">
    <property type="term" value="F:signaling receptor complex adaptor activity"/>
    <property type="evidence" value="ECO:0000318"/>
    <property type="project" value="GO_Central"/>
</dbReference>
<dbReference type="GO" id="GO:0007186">
    <property type="term" value="P:G protein-coupled receptor signaling pathway"/>
    <property type="evidence" value="ECO:0000318"/>
    <property type="project" value="GO_Central"/>
</dbReference>
<dbReference type="GO" id="GO:1902624">
    <property type="term" value="P:positive regulation of neutrophil migration"/>
    <property type="evidence" value="ECO:0000316"/>
    <property type="project" value="ZFIN"/>
</dbReference>
<dbReference type="GO" id="GO:0048920">
    <property type="term" value="P:posterior lateral line neuromast primordium migration"/>
    <property type="evidence" value="ECO:0000316"/>
    <property type="project" value="ZFIN"/>
</dbReference>
<dbReference type="CDD" id="cd00200">
    <property type="entry name" value="WD40"/>
    <property type="match status" value="1"/>
</dbReference>
<dbReference type="FunFam" id="2.130.10.10:FF:000007">
    <property type="entry name" value="Guanine nucleotide-binding protein G(I)/G(S)/G(T) subunit beta-1"/>
    <property type="match status" value="1"/>
</dbReference>
<dbReference type="Gene3D" id="2.130.10.10">
    <property type="entry name" value="YVTN repeat-like/Quinoprotein amine dehydrogenase"/>
    <property type="match status" value="1"/>
</dbReference>
<dbReference type="InterPro" id="IPR020472">
    <property type="entry name" value="G-protein_beta_WD-40_rep"/>
</dbReference>
<dbReference type="InterPro" id="IPR001632">
    <property type="entry name" value="Gprotein_B"/>
</dbReference>
<dbReference type="InterPro" id="IPR016346">
    <property type="entry name" value="Guanine_nucleotide-bd_bsu"/>
</dbReference>
<dbReference type="InterPro" id="IPR015943">
    <property type="entry name" value="WD40/YVTN_repeat-like_dom_sf"/>
</dbReference>
<dbReference type="InterPro" id="IPR019775">
    <property type="entry name" value="WD40_repeat_CS"/>
</dbReference>
<dbReference type="InterPro" id="IPR036322">
    <property type="entry name" value="WD40_repeat_dom_sf"/>
</dbReference>
<dbReference type="InterPro" id="IPR001680">
    <property type="entry name" value="WD40_rpt"/>
</dbReference>
<dbReference type="PANTHER" id="PTHR19850">
    <property type="entry name" value="GUANINE NUCLEOTIDE-BINDING PROTEIN BETA G PROTEIN BETA"/>
    <property type="match status" value="1"/>
</dbReference>
<dbReference type="Pfam" id="PF25391">
    <property type="entry name" value="WD40_Gbeta"/>
    <property type="match status" value="1"/>
</dbReference>
<dbReference type="PIRSF" id="PIRSF002394">
    <property type="entry name" value="GN-bd_beta"/>
    <property type="match status" value="1"/>
</dbReference>
<dbReference type="PRINTS" id="PR00319">
    <property type="entry name" value="GPROTEINB"/>
</dbReference>
<dbReference type="PRINTS" id="PR00320">
    <property type="entry name" value="GPROTEINBRPT"/>
</dbReference>
<dbReference type="SMART" id="SM00320">
    <property type="entry name" value="WD40"/>
    <property type="match status" value="7"/>
</dbReference>
<dbReference type="SUPFAM" id="SSF50978">
    <property type="entry name" value="WD40 repeat-like"/>
    <property type="match status" value="1"/>
</dbReference>
<dbReference type="PROSITE" id="PS00678">
    <property type="entry name" value="WD_REPEATS_1"/>
    <property type="match status" value="3"/>
</dbReference>
<dbReference type="PROSITE" id="PS50082">
    <property type="entry name" value="WD_REPEATS_2"/>
    <property type="match status" value="6"/>
</dbReference>
<dbReference type="PROSITE" id="PS50294">
    <property type="entry name" value="WD_REPEATS_REGION"/>
    <property type="match status" value="1"/>
</dbReference>
<sequence length="340" mass="37286">MSELDQLRQEAEQLKNQIRDARKACADATLSQITANIDPVGRIQMRTRRTLRGHLAKIYAMHWGTDSRLLVSASQDGKLIIWDSYTTNKVHAIPLRSSWVMTCAYAPSGNYVACGGLDNICSIYNLKTREGNVRVSRELAGHTGYLSCCRFLDDNQIVTSSGDTTCALWDIETGQQTTTFAGHTGDVMSLSLAPDTRLFVSGACDASAKLWDVREGMCRQTFTGHESDINAICFFPNGNAFATGSDDATCRLFDLRADQELMVYSHDNIICGITSVAFSKSGRLLLAGYDDFNCNVWDALKADRAGVLAGHDNRVSCLGVTDDGMAVATGSWDSFLKIWN</sequence>